<gene>
    <name evidence="1" type="primary">mraY</name>
    <name type="ordered locus">Mnod_5466</name>
</gene>
<organism>
    <name type="scientific">Methylobacterium nodulans (strain LMG 21967 / CNCM I-2342 / ORS 2060)</name>
    <dbReference type="NCBI Taxonomy" id="460265"/>
    <lineage>
        <taxon>Bacteria</taxon>
        <taxon>Pseudomonadati</taxon>
        <taxon>Pseudomonadota</taxon>
        <taxon>Alphaproteobacteria</taxon>
        <taxon>Hyphomicrobiales</taxon>
        <taxon>Methylobacteriaceae</taxon>
        <taxon>Methylobacterium</taxon>
    </lineage>
</organism>
<proteinExistence type="inferred from homology"/>
<accession>B8IMW7</accession>
<name>MRAY_METNO</name>
<comment type="function">
    <text evidence="1">Catalyzes the initial step of the lipid cycle reactions in the biosynthesis of the cell wall peptidoglycan: transfers peptidoglycan precursor phospho-MurNAc-pentapeptide from UDP-MurNAc-pentapeptide onto the lipid carrier undecaprenyl phosphate, yielding undecaprenyl-pyrophosphoryl-MurNAc-pentapeptide, known as lipid I.</text>
</comment>
<comment type="catalytic activity">
    <reaction evidence="1">
        <text>UDP-N-acetyl-alpha-D-muramoyl-L-alanyl-gamma-D-glutamyl-meso-2,6-diaminopimeloyl-D-alanyl-D-alanine + di-trans,octa-cis-undecaprenyl phosphate = di-trans,octa-cis-undecaprenyl diphospho-N-acetyl-alpha-D-muramoyl-L-alanyl-D-glutamyl-meso-2,6-diaminopimeloyl-D-alanyl-D-alanine + UMP</text>
        <dbReference type="Rhea" id="RHEA:28386"/>
        <dbReference type="ChEBI" id="CHEBI:57865"/>
        <dbReference type="ChEBI" id="CHEBI:60392"/>
        <dbReference type="ChEBI" id="CHEBI:61386"/>
        <dbReference type="ChEBI" id="CHEBI:61387"/>
        <dbReference type="EC" id="2.7.8.13"/>
    </reaction>
</comment>
<comment type="cofactor">
    <cofactor evidence="1">
        <name>Mg(2+)</name>
        <dbReference type="ChEBI" id="CHEBI:18420"/>
    </cofactor>
</comment>
<comment type="pathway">
    <text evidence="1">Cell wall biogenesis; peptidoglycan biosynthesis.</text>
</comment>
<comment type="subcellular location">
    <subcellularLocation>
        <location evidence="1">Cell inner membrane</location>
        <topology evidence="1">Multi-pass membrane protein</topology>
    </subcellularLocation>
</comment>
<comment type="similarity">
    <text evidence="1">Belongs to the glycosyltransferase 4 family. MraY subfamily.</text>
</comment>
<reference key="1">
    <citation type="submission" date="2009-01" db="EMBL/GenBank/DDBJ databases">
        <title>Complete sequence of chromosome of Methylobacterium nodulans ORS 2060.</title>
        <authorList>
            <consortium name="US DOE Joint Genome Institute"/>
            <person name="Lucas S."/>
            <person name="Copeland A."/>
            <person name="Lapidus A."/>
            <person name="Glavina del Rio T."/>
            <person name="Dalin E."/>
            <person name="Tice H."/>
            <person name="Bruce D."/>
            <person name="Goodwin L."/>
            <person name="Pitluck S."/>
            <person name="Sims D."/>
            <person name="Brettin T."/>
            <person name="Detter J.C."/>
            <person name="Han C."/>
            <person name="Larimer F."/>
            <person name="Land M."/>
            <person name="Hauser L."/>
            <person name="Kyrpides N."/>
            <person name="Ivanova N."/>
            <person name="Marx C.J."/>
            <person name="Richardson P."/>
        </authorList>
    </citation>
    <scope>NUCLEOTIDE SEQUENCE [LARGE SCALE GENOMIC DNA]</scope>
    <source>
        <strain>LMG 21967 / CNCM I-2342 / ORS 2060</strain>
    </source>
</reference>
<dbReference type="EC" id="2.7.8.13" evidence="1"/>
<dbReference type="EMBL" id="CP001349">
    <property type="protein sequence ID" value="ACL60310.1"/>
    <property type="molecule type" value="Genomic_DNA"/>
</dbReference>
<dbReference type="RefSeq" id="WP_015931917.1">
    <property type="nucleotide sequence ID" value="NC_011894.1"/>
</dbReference>
<dbReference type="SMR" id="B8IMW7"/>
<dbReference type="STRING" id="460265.Mnod_5466"/>
<dbReference type="KEGG" id="mno:Mnod_5466"/>
<dbReference type="eggNOG" id="COG0472">
    <property type="taxonomic scope" value="Bacteria"/>
</dbReference>
<dbReference type="HOGENOM" id="CLU_023982_0_0_5"/>
<dbReference type="OrthoDB" id="9805475at2"/>
<dbReference type="UniPathway" id="UPA00219"/>
<dbReference type="Proteomes" id="UP000008207">
    <property type="component" value="Chromosome"/>
</dbReference>
<dbReference type="GO" id="GO:0005886">
    <property type="term" value="C:plasma membrane"/>
    <property type="evidence" value="ECO:0007669"/>
    <property type="project" value="UniProtKB-SubCell"/>
</dbReference>
<dbReference type="GO" id="GO:0046872">
    <property type="term" value="F:metal ion binding"/>
    <property type="evidence" value="ECO:0007669"/>
    <property type="project" value="UniProtKB-KW"/>
</dbReference>
<dbReference type="GO" id="GO:0008963">
    <property type="term" value="F:phospho-N-acetylmuramoyl-pentapeptide-transferase activity"/>
    <property type="evidence" value="ECO:0007669"/>
    <property type="project" value="UniProtKB-UniRule"/>
</dbReference>
<dbReference type="GO" id="GO:0051992">
    <property type="term" value="F:UDP-N-acetylmuramoyl-L-alanyl-D-glutamyl-meso-2,6-diaminopimelyl-D-alanyl-D-alanine:undecaprenyl-phosphate transferase activity"/>
    <property type="evidence" value="ECO:0007669"/>
    <property type="project" value="RHEA"/>
</dbReference>
<dbReference type="GO" id="GO:0051301">
    <property type="term" value="P:cell division"/>
    <property type="evidence" value="ECO:0007669"/>
    <property type="project" value="UniProtKB-KW"/>
</dbReference>
<dbReference type="GO" id="GO:0071555">
    <property type="term" value="P:cell wall organization"/>
    <property type="evidence" value="ECO:0007669"/>
    <property type="project" value="UniProtKB-KW"/>
</dbReference>
<dbReference type="GO" id="GO:0009252">
    <property type="term" value="P:peptidoglycan biosynthetic process"/>
    <property type="evidence" value="ECO:0007669"/>
    <property type="project" value="UniProtKB-UniRule"/>
</dbReference>
<dbReference type="GO" id="GO:0008360">
    <property type="term" value="P:regulation of cell shape"/>
    <property type="evidence" value="ECO:0007669"/>
    <property type="project" value="UniProtKB-KW"/>
</dbReference>
<dbReference type="CDD" id="cd06852">
    <property type="entry name" value="GT_MraY"/>
    <property type="match status" value="1"/>
</dbReference>
<dbReference type="HAMAP" id="MF_00038">
    <property type="entry name" value="MraY"/>
    <property type="match status" value="1"/>
</dbReference>
<dbReference type="InterPro" id="IPR000715">
    <property type="entry name" value="Glycosyl_transferase_4"/>
</dbReference>
<dbReference type="InterPro" id="IPR003524">
    <property type="entry name" value="PNAcMuramoyl-5peptid_Trfase"/>
</dbReference>
<dbReference type="InterPro" id="IPR018480">
    <property type="entry name" value="PNAcMuramoyl-5peptid_Trfase_CS"/>
</dbReference>
<dbReference type="NCBIfam" id="TIGR00445">
    <property type="entry name" value="mraY"/>
    <property type="match status" value="1"/>
</dbReference>
<dbReference type="PANTHER" id="PTHR22926">
    <property type="entry name" value="PHOSPHO-N-ACETYLMURAMOYL-PENTAPEPTIDE-TRANSFERASE"/>
    <property type="match status" value="1"/>
</dbReference>
<dbReference type="PANTHER" id="PTHR22926:SF5">
    <property type="entry name" value="PHOSPHO-N-ACETYLMURAMOYL-PENTAPEPTIDE-TRANSFERASE HOMOLOG"/>
    <property type="match status" value="1"/>
</dbReference>
<dbReference type="Pfam" id="PF00953">
    <property type="entry name" value="Glycos_transf_4"/>
    <property type="match status" value="1"/>
</dbReference>
<dbReference type="Pfam" id="PF10555">
    <property type="entry name" value="MraY_sig1"/>
    <property type="match status" value="1"/>
</dbReference>
<dbReference type="PROSITE" id="PS01347">
    <property type="entry name" value="MRAY_1"/>
    <property type="match status" value="1"/>
</dbReference>
<dbReference type="PROSITE" id="PS01348">
    <property type="entry name" value="MRAY_2"/>
    <property type="match status" value="1"/>
</dbReference>
<sequence length="361" mass="38807">MLYLLSELSGVFSPFNVFRYITFRTGGALFTAGLFVFWFGPWIISLLRLRQGKGQPIREDGPQTHLLTKRGTPTMGGLMILAGLLVAVLLWANPRNSYVWITVVVTLGFGAIGFYDDYLKVTKQSHKGFSGKFRLGLEALIAVAACVAVAEYSAPGLAYRLAFPVFKDAIVNLGLFWILFASFVIVGAGNAVNITDGLDGLAIVPVMIAAATFGIIAYLVGNVIYASYLQVNYVPGTGELAVVCGALIGAGLGFLWFNAPPAQIFMGDTGSLALGGLLGTVAVATKHEIVLAVVGGLFVLEIASVIIQVASFKLTGKRVFRMAPIHHHFEQKGWKEPQVVIRFWIIAVVLALLGLATLKLR</sequence>
<feature type="chain" id="PRO_1000117185" description="Phospho-N-acetylmuramoyl-pentapeptide-transferase">
    <location>
        <begin position="1"/>
        <end position="361"/>
    </location>
</feature>
<feature type="transmembrane region" description="Helical" evidence="1">
    <location>
        <begin position="27"/>
        <end position="47"/>
    </location>
</feature>
<feature type="transmembrane region" description="Helical" evidence="1">
    <location>
        <begin position="72"/>
        <end position="92"/>
    </location>
</feature>
<feature type="transmembrane region" description="Helical" evidence="1">
    <location>
        <begin position="99"/>
        <end position="119"/>
    </location>
</feature>
<feature type="transmembrane region" description="Helical" evidence="1">
    <location>
        <begin position="139"/>
        <end position="159"/>
    </location>
</feature>
<feature type="transmembrane region" description="Helical" evidence="1">
    <location>
        <begin position="169"/>
        <end position="189"/>
    </location>
</feature>
<feature type="transmembrane region" description="Helical" evidence="1">
    <location>
        <begin position="200"/>
        <end position="220"/>
    </location>
</feature>
<feature type="transmembrane region" description="Helical" evidence="1">
    <location>
        <begin position="240"/>
        <end position="260"/>
    </location>
</feature>
<feature type="transmembrane region" description="Helical" evidence="1">
    <location>
        <begin position="264"/>
        <end position="284"/>
    </location>
</feature>
<feature type="transmembrane region" description="Helical" evidence="1">
    <location>
        <begin position="289"/>
        <end position="309"/>
    </location>
</feature>
<feature type="transmembrane region" description="Helical" evidence="1">
    <location>
        <begin position="338"/>
        <end position="358"/>
    </location>
</feature>
<keyword id="KW-0131">Cell cycle</keyword>
<keyword id="KW-0132">Cell division</keyword>
<keyword id="KW-0997">Cell inner membrane</keyword>
<keyword id="KW-1003">Cell membrane</keyword>
<keyword id="KW-0133">Cell shape</keyword>
<keyword id="KW-0961">Cell wall biogenesis/degradation</keyword>
<keyword id="KW-0460">Magnesium</keyword>
<keyword id="KW-0472">Membrane</keyword>
<keyword id="KW-0479">Metal-binding</keyword>
<keyword id="KW-0573">Peptidoglycan synthesis</keyword>
<keyword id="KW-1185">Reference proteome</keyword>
<keyword id="KW-0808">Transferase</keyword>
<keyword id="KW-0812">Transmembrane</keyword>
<keyword id="KW-1133">Transmembrane helix</keyword>
<evidence type="ECO:0000255" key="1">
    <source>
        <dbReference type="HAMAP-Rule" id="MF_00038"/>
    </source>
</evidence>
<protein>
    <recommendedName>
        <fullName evidence="1">Phospho-N-acetylmuramoyl-pentapeptide-transferase</fullName>
        <ecNumber evidence="1">2.7.8.13</ecNumber>
    </recommendedName>
    <alternativeName>
        <fullName evidence="1">UDP-MurNAc-pentapeptide phosphotransferase</fullName>
    </alternativeName>
</protein>